<proteinExistence type="evidence at protein level"/>
<dbReference type="EC" id="2.7.1.119"/>
<dbReference type="EMBL" id="X03615">
    <property type="protein sequence ID" value="CAA27276.1"/>
    <property type="molecule type" value="Genomic_DNA"/>
</dbReference>
<dbReference type="PIR" id="A23507">
    <property type="entry name" value="WGSMHH"/>
</dbReference>
<dbReference type="RefSeq" id="WP_063842185.1">
    <property type="nucleotide sequence ID" value="NG_047472.1"/>
</dbReference>
<dbReference type="PDB" id="6IY9">
    <property type="method" value="X-ray"/>
    <property type="resolution" value="2.40 A"/>
    <property type="chains" value="A/B=1-332"/>
</dbReference>
<dbReference type="PDBsum" id="6IY9"/>
<dbReference type="SMR" id="P09979"/>
<dbReference type="STRING" id="68042.GCA_001553435_07860"/>
<dbReference type="CARD" id="ARO:3002661">
    <property type="molecule name" value="APH(7'')-Ia"/>
    <property type="mechanism identifier" value="ARO:0001004"/>
    <property type="mechanism name" value="antibiotic inactivation"/>
</dbReference>
<dbReference type="KEGG" id="ag:CAA27276"/>
<dbReference type="BRENDA" id="2.7.1.119">
    <property type="organism ID" value="6043"/>
</dbReference>
<dbReference type="GO" id="GO:0005524">
    <property type="term" value="F:ATP binding"/>
    <property type="evidence" value="ECO:0007669"/>
    <property type="project" value="UniProtKB-KW"/>
</dbReference>
<dbReference type="GO" id="GO:0008904">
    <property type="term" value="F:hygromycin-B 7''-O-phosphotransferase activity"/>
    <property type="evidence" value="ECO:0007669"/>
    <property type="project" value="UniProtKB-EC"/>
</dbReference>
<dbReference type="GO" id="GO:0046677">
    <property type="term" value="P:response to antibiotic"/>
    <property type="evidence" value="ECO:0007669"/>
    <property type="project" value="UniProtKB-KW"/>
</dbReference>
<dbReference type="Gene3D" id="3.90.1200.10">
    <property type="match status" value="1"/>
</dbReference>
<dbReference type="InterPro" id="IPR051678">
    <property type="entry name" value="AGP_Transferase"/>
</dbReference>
<dbReference type="InterPro" id="IPR002575">
    <property type="entry name" value="Aminoglycoside_PTrfase"/>
</dbReference>
<dbReference type="InterPro" id="IPR016259">
    <property type="entry name" value="Hygromycin-B_Kinase"/>
</dbReference>
<dbReference type="InterPro" id="IPR011009">
    <property type="entry name" value="Kinase-like_dom_sf"/>
</dbReference>
<dbReference type="NCBIfam" id="NF000137">
    <property type="entry name" value="APH_7pp_Ia"/>
    <property type="match status" value="1"/>
</dbReference>
<dbReference type="PANTHER" id="PTHR21310:SF15">
    <property type="entry name" value="AMINOGLYCOSIDE PHOSPHOTRANSFERASE DOMAIN-CONTAINING PROTEIN"/>
    <property type="match status" value="1"/>
</dbReference>
<dbReference type="PANTHER" id="PTHR21310">
    <property type="entry name" value="AMINOGLYCOSIDE PHOSPHOTRANSFERASE-RELATED-RELATED"/>
    <property type="match status" value="1"/>
</dbReference>
<dbReference type="Pfam" id="PF01636">
    <property type="entry name" value="APH"/>
    <property type="match status" value="1"/>
</dbReference>
<dbReference type="PIRSF" id="PIRSF000707">
    <property type="entry name" value="Hygromycin-B_kinase"/>
    <property type="match status" value="1"/>
</dbReference>
<dbReference type="SUPFAM" id="SSF56112">
    <property type="entry name" value="Protein kinase-like (PK-like)"/>
    <property type="match status" value="1"/>
</dbReference>
<gene>
    <name type="primary">hyg</name>
</gene>
<keyword id="KW-0002">3D-structure</keyword>
<keyword id="KW-0046">Antibiotic resistance</keyword>
<keyword id="KW-0067">ATP-binding</keyword>
<keyword id="KW-0418">Kinase</keyword>
<keyword id="KW-0547">Nucleotide-binding</keyword>
<keyword id="KW-0808">Transferase</keyword>
<reference key="1">
    <citation type="journal article" date="1986" name="Nucleic Acids Res.">
        <title>Nucleotide sequence of the hygromycin B phosphotransferase gene from Streptomyces hygroscopicus.</title>
        <authorList>
            <person name="Zalacain M."/>
            <person name="Gonzalez A."/>
            <person name="Guerrero M.C."/>
            <person name="Mattaliano R.J."/>
            <person name="Malpartida F."/>
            <person name="Jimenez A."/>
        </authorList>
    </citation>
    <scope>NUCLEOTIDE SEQUENCE [GENOMIC DNA]</scope>
</reference>
<protein>
    <recommendedName>
        <fullName>Hygromycin-B 7''-O-kinase</fullName>
        <ecNumber>2.7.1.119</ecNumber>
    </recommendedName>
    <alternativeName>
        <fullName>APH(7'')</fullName>
    </alternativeName>
    <alternativeName>
        <fullName>Hygromycin B phosphotransferase</fullName>
    </alternativeName>
    <alternativeName>
        <fullName>Hygromycin-B kinase</fullName>
    </alternativeName>
</protein>
<evidence type="ECO:0000250" key="1"/>
<evidence type="ECO:0000305" key="2"/>
<evidence type="ECO:0007829" key="3">
    <source>
        <dbReference type="PDB" id="6IY9"/>
    </source>
</evidence>
<comment type="function">
    <text>The aminoglycoside phosphotransferases achieve inactivation of their antibiotic substrates by phosphorylation.</text>
</comment>
<comment type="catalytic activity">
    <reaction>
        <text>hygromycin B + ATP = 7''-O-phosphohygromycin B + ADP + H(+)</text>
        <dbReference type="Rhea" id="RHEA:23388"/>
        <dbReference type="ChEBI" id="CHEBI:15378"/>
        <dbReference type="ChEBI" id="CHEBI:30616"/>
        <dbReference type="ChEBI" id="CHEBI:57929"/>
        <dbReference type="ChEBI" id="CHEBI:57971"/>
        <dbReference type="ChEBI" id="CHEBI:456216"/>
        <dbReference type="EC" id="2.7.1.119"/>
    </reaction>
</comment>
<comment type="similarity">
    <text evidence="2">Belongs to the aminoglycoside phosphotransferase family.</text>
</comment>
<name>KHYB_STRHY</name>
<organism>
    <name type="scientific">Streptomyces hygroscopicus</name>
    <dbReference type="NCBI Taxonomy" id="1912"/>
    <lineage>
        <taxon>Bacteria</taxon>
        <taxon>Bacillati</taxon>
        <taxon>Actinomycetota</taxon>
        <taxon>Actinomycetes</taxon>
        <taxon>Kitasatosporales</taxon>
        <taxon>Streptomycetaceae</taxon>
        <taxon>Streptomyces</taxon>
        <taxon>Streptomyces violaceusniger group</taxon>
    </lineage>
</organism>
<sequence>MTQESLLLLDRIDSDDSYASLRNDQEFWEPLARRALEELGLPVPPVLRVPGESTNPVLVGEPDPVIKLFGEHWCGPESLASESEAYAVLADAPVPVPRLLGRGELRPGTGAWPWPYLVMSRMTGTTWRSAMDGTTDRNALLALARELGRVLGRLHRVPLTGNTVLTPHSEVFPELLRERRAATVEDHRGWGYLSPRLLDRLEDWLPDVDTLLAGREPRFVHGDLHGTNIFVDLAATEVTGIVDFTDVYAGDSRYSLVQLHLNAFRGDREILAALLDGAQWKRTEDFARELLAFTFLHDFEVFEETPLDLSGFTDPEELAQFLWGPPDTAPGA</sequence>
<feature type="chain" id="PRO_0000204800" description="Hygromycin-B 7''-O-kinase">
    <location>
        <begin position="1"/>
        <end position="332"/>
    </location>
</feature>
<feature type="active site" description="Proton acceptor" evidence="1">
    <location>
        <position position="223"/>
    </location>
</feature>
<feature type="helix" evidence="3">
    <location>
        <begin position="4"/>
        <end position="10"/>
    </location>
</feature>
<feature type="helix" evidence="3">
    <location>
        <begin position="15"/>
        <end position="21"/>
    </location>
</feature>
<feature type="helix" evidence="3">
    <location>
        <begin position="25"/>
        <end position="38"/>
    </location>
</feature>
<feature type="strand" evidence="3">
    <location>
        <begin position="57"/>
        <end position="63"/>
    </location>
</feature>
<feature type="strand" evidence="3">
    <location>
        <begin position="65"/>
        <end position="68"/>
    </location>
</feature>
<feature type="strand" evidence="3">
    <location>
        <begin position="71"/>
        <end position="74"/>
    </location>
</feature>
<feature type="helix" evidence="3">
    <location>
        <begin position="75"/>
        <end position="88"/>
    </location>
</feature>
<feature type="turn" evidence="3">
    <location>
        <begin position="89"/>
        <end position="91"/>
    </location>
</feature>
<feature type="strand" evidence="3">
    <location>
        <begin position="99"/>
        <end position="106"/>
    </location>
</feature>
<feature type="strand" evidence="3">
    <location>
        <begin position="109"/>
        <end position="111"/>
    </location>
</feature>
<feature type="strand" evidence="3">
    <location>
        <begin position="115"/>
        <end position="119"/>
    </location>
</feature>
<feature type="strand" evidence="3">
    <location>
        <begin position="124"/>
        <end position="126"/>
    </location>
</feature>
<feature type="helix" evidence="3">
    <location>
        <begin position="127"/>
        <end position="132"/>
    </location>
</feature>
<feature type="helix" evidence="3">
    <location>
        <begin position="137"/>
        <end position="155"/>
    </location>
</feature>
<feature type="strand" evidence="3">
    <location>
        <begin position="162"/>
        <end position="166"/>
    </location>
</feature>
<feature type="helix" evidence="3">
    <location>
        <begin position="171"/>
        <end position="190"/>
    </location>
</feature>
<feature type="helix" evidence="3">
    <location>
        <begin position="195"/>
        <end position="204"/>
    </location>
</feature>
<feature type="helix" evidence="3">
    <location>
        <begin position="208"/>
        <end position="211"/>
    </location>
</feature>
<feature type="turn" evidence="3">
    <location>
        <begin position="212"/>
        <end position="214"/>
    </location>
</feature>
<feature type="strand" evidence="3">
    <location>
        <begin position="218"/>
        <end position="222"/>
    </location>
</feature>
<feature type="strand" evidence="3">
    <location>
        <begin position="228"/>
        <end position="232"/>
    </location>
</feature>
<feature type="turn" evidence="3">
    <location>
        <begin position="233"/>
        <end position="236"/>
    </location>
</feature>
<feature type="strand" evidence="3">
    <location>
        <begin position="237"/>
        <end position="241"/>
    </location>
</feature>
<feature type="strand" evidence="3">
    <location>
        <begin position="245"/>
        <end position="250"/>
    </location>
</feature>
<feature type="helix" evidence="3">
    <location>
        <begin position="252"/>
        <end position="261"/>
    </location>
</feature>
<feature type="helix" evidence="3">
    <location>
        <begin position="268"/>
        <end position="277"/>
    </location>
</feature>
<feature type="helix" evidence="3">
    <location>
        <begin position="286"/>
        <end position="295"/>
    </location>
</feature>
<feature type="helix" evidence="3">
    <location>
        <begin position="301"/>
        <end position="304"/>
    </location>
</feature>
<feature type="helix" evidence="3">
    <location>
        <begin position="315"/>
        <end position="323"/>
    </location>
</feature>
<accession>P09979</accession>